<dbReference type="EC" id="3.5.2.3" evidence="1"/>
<dbReference type="EMBL" id="CU928161">
    <property type="protein sequence ID" value="CAR02403.1"/>
    <property type="molecule type" value="Genomic_DNA"/>
</dbReference>
<dbReference type="RefSeq" id="WP_000126545.1">
    <property type="nucleotide sequence ID" value="NC_011742.1"/>
</dbReference>
<dbReference type="SMR" id="B7MIK3"/>
<dbReference type="MEROPS" id="M38.A02"/>
<dbReference type="KEGG" id="ecz:ECS88_1076"/>
<dbReference type="HOGENOM" id="CLU_041558_1_0_6"/>
<dbReference type="UniPathway" id="UPA00070">
    <property type="reaction ID" value="UER00117"/>
</dbReference>
<dbReference type="Proteomes" id="UP000000747">
    <property type="component" value="Chromosome"/>
</dbReference>
<dbReference type="GO" id="GO:0005829">
    <property type="term" value="C:cytosol"/>
    <property type="evidence" value="ECO:0007669"/>
    <property type="project" value="TreeGrafter"/>
</dbReference>
<dbReference type="GO" id="GO:0004151">
    <property type="term" value="F:dihydroorotase activity"/>
    <property type="evidence" value="ECO:0007669"/>
    <property type="project" value="UniProtKB-UniRule"/>
</dbReference>
<dbReference type="GO" id="GO:0008270">
    <property type="term" value="F:zinc ion binding"/>
    <property type="evidence" value="ECO:0007669"/>
    <property type="project" value="UniProtKB-UniRule"/>
</dbReference>
<dbReference type="GO" id="GO:0006207">
    <property type="term" value="P:'de novo' pyrimidine nucleobase biosynthetic process"/>
    <property type="evidence" value="ECO:0007669"/>
    <property type="project" value="TreeGrafter"/>
</dbReference>
<dbReference type="GO" id="GO:0044205">
    <property type="term" value="P:'de novo' UMP biosynthetic process"/>
    <property type="evidence" value="ECO:0007669"/>
    <property type="project" value="UniProtKB-UniRule"/>
</dbReference>
<dbReference type="CDD" id="cd01294">
    <property type="entry name" value="DHOase"/>
    <property type="match status" value="1"/>
</dbReference>
<dbReference type="FunFam" id="3.20.20.140:FF:000006">
    <property type="entry name" value="Dihydroorotase"/>
    <property type="match status" value="1"/>
</dbReference>
<dbReference type="Gene3D" id="3.20.20.140">
    <property type="entry name" value="Metal-dependent hydrolases"/>
    <property type="match status" value="1"/>
</dbReference>
<dbReference type="HAMAP" id="MF_00219">
    <property type="entry name" value="PyrC_classII"/>
    <property type="match status" value="1"/>
</dbReference>
<dbReference type="InterPro" id="IPR006680">
    <property type="entry name" value="Amidohydro-rel"/>
</dbReference>
<dbReference type="InterPro" id="IPR004721">
    <property type="entry name" value="DHOdimr"/>
</dbReference>
<dbReference type="InterPro" id="IPR002195">
    <property type="entry name" value="Dihydroorotase_CS"/>
</dbReference>
<dbReference type="InterPro" id="IPR032466">
    <property type="entry name" value="Metal_Hydrolase"/>
</dbReference>
<dbReference type="NCBIfam" id="TIGR00856">
    <property type="entry name" value="pyrC_dimer"/>
    <property type="match status" value="1"/>
</dbReference>
<dbReference type="PANTHER" id="PTHR43137">
    <property type="entry name" value="DIHYDROOROTASE"/>
    <property type="match status" value="1"/>
</dbReference>
<dbReference type="PANTHER" id="PTHR43137:SF1">
    <property type="entry name" value="DIHYDROOROTASE"/>
    <property type="match status" value="1"/>
</dbReference>
<dbReference type="Pfam" id="PF01979">
    <property type="entry name" value="Amidohydro_1"/>
    <property type="match status" value="1"/>
</dbReference>
<dbReference type="PIRSF" id="PIRSF001237">
    <property type="entry name" value="DHOdimr"/>
    <property type="match status" value="1"/>
</dbReference>
<dbReference type="SUPFAM" id="SSF51556">
    <property type="entry name" value="Metallo-dependent hydrolases"/>
    <property type="match status" value="1"/>
</dbReference>
<dbReference type="PROSITE" id="PS00482">
    <property type="entry name" value="DIHYDROOROTASE_1"/>
    <property type="match status" value="1"/>
</dbReference>
<dbReference type="PROSITE" id="PS00483">
    <property type="entry name" value="DIHYDROOROTASE_2"/>
    <property type="match status" value="1"/>
</dbReference>
<keyword id="KW-0378">Hydrolase</keyword>
<keyword id="KW-0479">Metal-binding</keyword>
<keyword id="KW-0665">Pyrimidine biosynthesis</keyword>
<keyword id="KW-1185">Reference proteome</keyword>
<keyword id="KW-0862">Zinc</keyword>
<name>PYRC_ECO45</name>
<evidence type="ECO:0000255" key="1">
    <source>
        <dbReference type="HAMAP-Rule" id="MF_00219"/>
    </source>
</evidence>
<comment type="function">
    <text evidence="1">Catalyzes the reversible cyclization of carbamoyl aspartate to dihydroorotate.</text>
</comment>
<comment type="catalytic activity">
    <reaction evidence="1">
        <text>(S)-dihydroorotate + H2O = N-carbamoyl-L-aspartate + H(+)</text>
        <dbReference type="Rhea" id="RHEA:24296"/>
        <dbReference type="ChEBI" id="CHEBI:15377"/>
        <dbReference type="ChEBI" id="CHEBI:15378"/>
        <dbReference type="ChEBI" id="CHEBI:30864"/>
        <dbReference type="ChEBI" id="CHEBI:32814"/>
        <dbReference type="EC" id="3.5.2.3"/>
    </reaction>
</comment>
<comment type="cofactor">
    <cofactor evidence="1">
        <name>Zn(2+)</name>
        <dbReference type="ChEBI" id="CHEBI:29105"/>
    </cofactor>
    <text evidence="1">Binds 2 Zn(2+) ions per subunit.</text>
</comment>
<comment type="pathway">
    <text evidence="1">Pyrimidine metabolism; UMP biosynthesis via de novo pathway; (S)-dihydroorotate from bicarbonate: step 3/3.</text>
</comment>
<comment type="subunit">
    <text evidence="1">Homodimer.</text>
</comment>
<comment type="similarity">
    <text evidence="1">Belongs to the metallo-dependent hydrolases superfamily. DHOase family. Class II DHOase subfamily.</text>
</comment>
<organism>
    <name type="scientific">Escherichia coli O45:K1 (strain S88 / ExPEC)</name>
    <dbReference type="NCBI Taxonomy" id="585035"/>
    <lineage>
        <taxon>Bacteria</taxon>
        <taxon>Pseudomonadati</taxon>
        <taxon>Pseudomonadota</taxon>
        <taxon>Gammaproteobacteria</taxon>
        <taxon>Enterobacterales</taxon>
        <taxon>Enterobacteriaceae</taxon>
        <taxon>Escherichia</taxon>
    </lineage>
</organism>
<gene>
    <name evidence="1" type="primary">pyrC</name>
    <name type="ordered locus">ECS88_1076</name>
</gene>
<accession>B7MIK3</accession>
<feature type="chain" id="PRO_1000193073" description="Dihydroorotase">
    <location>
        <begin position="1"/>
        <end position="348"/>
    </location>
</feature>
<feature type="active site" evidence="1">
    <location>
        <position position="251"/>
    </location>
</feature>
<feature type="binding site" evidence="1">
    <location>
        <position position="17"/>
    </location>
    <ligand>
        <name>Zn(2+)</name>
        <dbReference type="ChEBI" id="CHEBI:29105"/>
        <label>1</label>
    </ligand>
</feature>
<feature type="binding site" evidence="1">
    <location>
        <begin position="19"/>
        <end position="21"/>
    </location>
    <ligand>
        <name>substrate</name>
    </ligand>
</feature>
<feature type="binding site" evidence="1">
    <location>
        <position position="19"/>
    </location>
    <ligand>
        <name>Zn(2+)</name>
        <dbReference type="ChEBI" id="CHEBI:29105"/>
        <label>1</label>
    </ligand>
</feature>
<feature type="binding site" evidence="1">
    <location>
        <position position="45"/>
    </location>
    <ligand>
        <name>substrate</name>
    </ligand>
</feature>
<feature type="binding site" description="via carbamate group" evidence="1">
    <location>
        <position position="103"/>
    </location>
    <ligand>
        <name>Zn(2+)</name>
        <dbReference type="ChEBI" id="CHEBI:29105"/>
        <label>1</label>
    </ligand>
</feature>
<feature type="binding site" description="via carbamate group" evidence="1">
    <location>
        <position position="103"/>
    </location>
    <ligand>
        <name>Zn(2+)</name>
        <dbReference type="ChEBI" id="CHEBI:29105"/>
        <label>2</label>
    </ligand>
</feature>
<feature type="binding site" evidence="1">
    <location>
        <position position="140"/>
    </location>
    <ligand>
        <name>substrate</name>
    </ligand>
</feature>
<feature type="binding site" evidence="1">
    <location>
        <position position="140"/>
    </location>
    <ligand>
        <name>Zn(2+)</name>
        <dbReference type="ChEBI" id="CHEBI:29105"/>
        <label>2</label>
    </ligand>
</feature>
<feature type="binding site" evidence="1">
    <location>
        <position position="178"/>
    </location>
    <ligand>
        <name>Zn(2+)</name>
        <dbReference type="ChEBI" id="CHEBI:29105"/>
        <label>2</label>
    </ligand>
</feature>
<feature type="binding site" evidence="1">
    <location>
        <position position="223"/>
    </location>
    <ligand>
        <name>substrate</name>
    </ligand>
</feature>
<feature type="binding site" evidence="1">
    <location>
        <position position="251"/>
    </location>
    <ligand>
        <name>Zn(2+)</name>
        <dbReference type="ChEBI" id="CHEBI:29105"/>
        <label>1</label>
    </ligand>
</feature>
<feature type="binding site" evidence="1">
    <location>
        <position position="255"/>
    </location>
    <ligand>
        <name>substrate</name>
    </ligand>
</feature>
<feature type="binding site" evidence="1">
    <location>
        <position position="267"/>
    </location>
    <ligand>
        <name>substrate</name>
    </ligand>
</feature>
<feature type="modified residue" description="N6-carboxylysine" evidence="1">
    <location>
        <position position="103"/>
    </location>
</feature>
<protein>
    <recommendedName>
        <fullName evidence="1">Dihydroorotase</fullName>
        <shortName evidence="1">DHOase</shortName>
        <ecNumber evidence="1">3.5.2.3</ecNumber>
    </recommendedName>
</protein>
<reference key="1">
    <citation type="journal article" date="2009" name="PLoS Genet.">
        <title>Organised genome dynamics in the Escherichia coli species results in highly diverse adaptive paths.</title>
        <authorList>
            <person name="Touchon M."/>
            <person name="Hoede C."/>
            <person name="Tenaillon O."/>
            <person name="Barbe V."/>
            <person name="Baeriswyl S."/>
            <person name="Bidet P."/>
            <person name="Bingen E."/>
            <person name="Bonacorsi S."/>
            <person name="Bouchier C."/>
            <person name="Bouvet O."/>
            <person name="Calteau A."/>
            <person name="Chiapello H."/>
            <person name="Clermont O."/>
            <person name="Cruveiller S."/>
            <person name="Danchin A."/>
            <person name="Diard M."/>
            <person name="Dossat C."/>
            <person name="Karoui M.E."/>
            <person name="Frapy E."/>
            <person name="Garry L."/>
            <person name="Ghigo J.M."/>
            <person name="Gilles A.M."/>
            <person name="Johnson J."/>
            <person name="Le Bouguenec C."/>
            <person name="Lescat M."/>
            <person name="Mangenot S."/>
            <person name="Martinez-Jehanne V."/>
            <person name="Matic I."/>
            <person name="Nassif X."/>
            <person name="Oztas S."/>
            <person name="Petit M.A."/>
            <person name="Pichon C."/>
            <person name="Rouy Z."/>
            <person name="Ruf C.S."/>
            <person name="Schneider D."/>
            <person name="Tourret J."/>
            <person name="Vacherie B."/>
            <person name="Vallenet D."/>
            <person name="Medigue C."/>
            <person name="Rocha E.P.C."/>
            <person name="Denamur E."/>
        </authorList>
    </citation>
    <scope>NUCLEOTIDE SEQUENCE [LARGE SCALE GENOMIC DNA]</scope>
    <source>
        <strain>S88 / ExPEC</strain>
    </source>
</reference>
<sequence length="348" mass="38839">MTAPSQVLKIRRPDDWHLHLRDGDMLKTVVPYTSEIYGRAIVMPNLAPPVTTVEAAVAYRQRILDAVPAGHDFTPLMTCYLTDSLDPNELERGFNEGVFTAAKLYPANATTNSSHGVTSVDAIMPVLERMEKIGMPLLVHGEVTHADIDIFDREARFIESVMEPLRQRLTALKVVFEHITTKDAADYVRDGNERLAATITPQHLMFNRNHMLVGGVRPHLYCLPILKRNIHQQALRELVASGFNRVFLGTDSAPHARHRKESSCGCAGCFNAPTALGSYATVFEEMNALQYFEAFCSVNGPQFYGLPVNDTFIELVREEQQVAESIALTDDTLVPFLAGETVRWSVKQ</sequence>
<proteinExistence type="inferred from homology"/>